<evidence type="ECO:0000255" key="1">
    <source>
        <dbReference type="HAMAP-Rule" id="MF_01185"/>
    </source>
</evidence>
<dbReference type="EMBL" id="AP006840">
    <property type="protein sequence ID" value="BAD39107.1"/>
    <property type="molecule type" value="Genomic_DNA"/>
</dbReference>
<dbReference type="RefSeq" id="WP_011194257.1">
    <property type="nucleotide sequence ID" value="NC_006177.1"/>
</dbReference>
<dbReference type="SMR" id="Q67T86"/>
<dbReference type="STRING" id="292459.STH122"/>
<dbReference type="KEGG" id="sth:STH122"/>
<dbReference type="eggNOG" id="COG1699">
    <property type="taxonomic scope" value="Bacteria"/>
</dbReference>
<dbReference type="HOGENOM" id="CLU_112356_0_2_9"/>
<dbReference type="OrthoDB" id="9801235at2"/>
<dbReference type="Proteomes" id="UP000000417">
    <property type="component" value="Chromosome"/>
</dbReference>
<dbReference type="GO" id="GO:0005737">
    <property type="term" value="C:cytoplasm"/>
    <property type="evidence" value="ECO:0007669"/>
    <property type="project" value="UniProtKB-SubCell"/>
</dbReference>
<dbReference type="GO" id="GO:0044780">
    <property type="term" value="P:bacterial-type flagellum assembly"/>
    <property type="evidence" value="ECO:0007669"/>
    <property type="project" value="UniProtKB-UniRule"/>
</dbReference>
<dbReference type="GO" id="GO:0006417">
    <property type="term" value="P:regulation of translation"/>
    <property type="evidence" value="ECO:0007669"/>
    <property type="project" value="UniProtKB-KW"/>
</dbReference>
<dbReference type="Gene3D" id="2.30.290.10">
    <property type="entry name" value="BH3618-like"/>
    <property type="match status" value="1"/>
</dbReference>
<dbReference type="HAMAP" id="MF_01185">
    <property type="entry name" value="FliW"/>
    <property type="match status" value="1"/>
</dbReference>
<dbReference type="InterPro" id="IPR003775">
    <property type="entry name" value="Flagellar_assembly_factor_FliW"/>
</dbReference>
<dbReference type="InterPro" id="IPR024046">
    <property type="entry name" value="Flagellar_assmbl_FliW_dom_sf"/>
</dbReference>
<dbReference type="NCBIfam" id="NF009799">
    <property type="entry name" value="PRK13285.2-2"/>
    <property type="match status" value="1"/>
</dbReference>
<dbReference type="PANTHER" id="PTHR39190">
    <property type="entry name" value="FLAGELLAR ASSEMBLY FACTOR FLIW"/>
    <property type="match status" value="1"/>
</dbReference>
<dbReference type="PANTHER" id="PTHR39190:SF1">
    <property type="entry name" value="FLAGELLAR ASSEMBLY FACTOR FLIW"/>
    <property type="match status" value="1"/>
</dbReference>
<dbReference type="Pfam" id="PF02623">
    <property type="entry name" value="FliW"/>
    <property type="match status" value="1"/>
</dbReference>
<dbReference type="SUPFAM" id="SSF141457">
    <property type="entry name" value="BH3618-like"/>
    <property type="match status" value="1"/>
</dbReference>
<reference key="1">
    <citation type="journal article" date="2004" name="Nucleic Acids Res.">
        <title>Genome sequence of Symbiobacterium thermophilum, an uncultivable bacterium that depends on microbial commensalism.</title>
        <authorList>
            <person name="Ueda K."/>
            <person name="Yamashita A."/>
            <person name="Ishikawa J."/>
            <person name="Shimada M."/>
            <person name="Watsuji T."/>
            <person name="Morimura K."/>
            <person name="Ikeda H."/>
            <person name="Hattori M."/>
            <person name="Beppu T."/>
        </authorList>
    </citation>
    <scope>NUCLEOTIDE SEQUENCE [LARGE SCALE GENOMIC DNA]</scope>
    <source>
        <strain>DSM 24528 / JCM 14929 / IAM 14863 / T</strain>
    </source>
</reference>
<proteinExistence type="inferred from homology"/>
<keyword id="KW-1005">Bacterial flagellum biogenesis</keyword>
<keyword id="KW-0143">Chaperone</keyword>
<keyword id="KW-0963">Cytoplasm</keyword>
<keyword id="KW-1185">Reference proteome</keyword>
<keyword id="KW-0810">Translation regulation</keyword>
<organism>
    <name type="scientific">Symbiobacterium thermophilum (strain DSM 24528 / JCM 14929 / IAM 14863 / T)</name>
    <dbReference type="NCBI Taxonomy" id="292459"/>
    <lineage>
        <taxon>Bacteria</taxon>
        <taxon>Bacillati</taxon>
        <taxon>Bacillota</taxon>
        <taxon>Clostridia</taxon>
        <taxon>Eubacteriales</taxon>
        <taxon>Symbiobacteriaceae</taxon>
        <taxon>Symbiobacterium</taxon>
    </lineage>
</organism>
<feature type="chain" id="PRO_0000273007" description="Flagellar assembly factor FliW">
    <location>
        <begin position="1"/>
        <end position="138"/>
    </location>
</feature>
<name>FLIW_SYMTH</name>
<accession>Q67T86</accession>
<protein>
    <recommendedName>
        <fullName evidence="1">Flagellar assembly factor FliW</fullName>
    </recommendedName>
</protein>
<comment type="function">
    <text evidence="1">Acts as an anti-CsrA protein, binds CsrA and prevents it from repressing translation of its target genes, one of which is flagellin. Binds to flagellin and participates in the assembly of the flagellum.</text>
</comment>
<comment type="subunit">
    <text evidence="1">Interacts with translational regulator CsrA and flagellin(s).</text>
</comment>
<comment type="subcellular location">
    <subcellularLocation>
        <location evidence="1">Cytoplasm</location>
    </subcellularLocation>
</comment>
<comment type="similarity">
    <text evidence="1">Belongs to the FliW family.</text>
</comment>
<gene>
    <name evidence="1" type="primary">fliW</name>
    <name type="ordered locus">STH122</name>
</gene>
<sequence>MDNVFEFPAGLYGFPDLKRFVVVDVPGAGDVVKQLVSTEDPNVGFTLVFPFAFFPRYSPDIPEEELVAVGAESAEQVLLYAIASVPEDFRKATANLRAPVLFNPFTRKGRQVILGDDRYGIREPLFQGADRIPAEEGR</sequence>